<accession>P15247</accession>
<dbReference type="EMBL" id="X14045">
    <property type="protein sequence ID" value="CAA32203.1"/>
    <property type="molecule type" value="mRNA"/>
</dbReference>
<dbReference type="EMBL" id="M30136">
    <property type="protein sequence ID" value="AAA39874.1"/>
    <property type="molecule type" value="Genomic_DNA"/>
</dbReference>
<dbReference type="CCDS" id="CCDS26562.1"/>
<dbReference type="PIR" id="JL0089">
    <property type="entry name" value="JL0089"/>
</dbReference>
<dbReference type="RefSeq" id="NP_032399.1">
    <property type="nucleotide sequence ID" value="NM_008373.2"/>
</dbReference>
<dbReference type="PDB" id="7OX4">
    <property type="method" value="X-ray"/>
    <property type="resolution" value="1.80 A"/>
    <property type="chains" value="C=19-144"/>
</dbReference>
<dbReference type="PDB" id="7XCB">
    <property type="method" value="X-ray"/>
    <property type="resolution" value="3.40 A"/>
    <property type="chains" value="A=21-140"/>
</dbReference>
<dbReference type="PDBsum" id="7OX4"/>
<dbReference type="PDBsum" id="7XCB"/>
<dbReference type="SMR" id="P15247"/>
<dbReference type="CORUM" id="P15247"/>
<dbReference type="FunCoup" id="P15247">
    <property type="interactions" value="600"/>
</dbReference>
<dbReference type="STRING" id="10090.ENSMUSP00000022019"/>
<dbReference type="GlyCosmos" id="P15247">
    <property type="glycosylation" value="4 sites, No reported glycans"/>
</dbReference>
<dbReference type="GlyGen" id="P15247">
    <property type="glycosylation" value="4 sites"/>
</dbReference>
<dbReference type="iPTMnet" id="P15247"/>
<dbReference type="PhosphoSitePlus" id="P15247"/>
<dbReference type="jPOST" id="P15247"/>
<dbReference type="PaxDb" id="10090-ENSMUSP00000022019"/>
<dbReference type="Antibodypedia" id="14762">
    <property type="antibodies" value="661 antibodies from 40 providers"/>
</dbReference>
<dbReference type="DNASU" id="16198"/>
<dbReference type="Ensembl" id="ENSMUST00000022019.4">
    <property type="protein sequence ID" value="ENSMUSP00000022019.4"/>
    <property type="gene ID" value="ENSMUSG00000021538.4"/>
</dbReference>
<dbReference type="GeneID" id="16198"/>
<dbReference type="KEGG" id="mmu:16198"/>
<dbReference type="UCSC" id="uc007qso.1">
    <property type="organism name" value="mouse"/>
</dbReference>
<dbReference type="AGR" id="MGI:96563"/>
<dbReference type="CTD" id="3578"/>
<dbReference type="MGI" id="MGI:96563">
    <property type="gene designation" value="Il9"/>
</dbReference>
<dbReference type="VEuPathDB" id="HostDB:ENSMUSG00000021538"/>
<dbReference type="eggNOG" id="ENOG502TDE1">
    <property type="taxonomic scope" value="Eukaryota"/>
</dbReference>
<dbReference type="GeneTree" id="ENSGT00390000015384"/>
<dbReference type="HOGENOM" id="CLU_150120_0_0_1"/>
<dbReference type="InParanoid" id="P15247"/>
<dbReference type="OMA" id="IPSDNCP"/>
<dbReference type="OrthoDB" id="9831043at2759"/>
<dbReference type="PhylomeDB" id="P15247"/>
<dbReference type="TreeFam" id="TF336367"/>
<dbReference type="Reactome" id="R-MMU-8985947">
    <property type="pathway name" value="Interleukin-9 signaling"/>
</dbReference>
<dbReference type="BioGRID-ORCS" id="16198">
    <property type="hits" value="2 hits in 76 CRISPR screens"/>
</dbReference>
<dbReference type="PRO" id="PR:P15247"/>
<dbReference type="Proteomes" id="UP000000589">
    <property type="component" value="Chromosome 13"/>
</dbReference>
<dbReference type="RNAct" id="P15247">
    <property type="molecule type" value="protein"/>
</dbReference>
<dbReference type="Bgee" id="ENSMUSG00000021538">
    <property type="expression patterns" value="Expressed in epiblast cell in embryo and 10 other cell types or tissues"/>
</dbReference>
<dbReference type="GO" id="GO:0005615">
    <property type="term" value="C:extracellular space"/>
    <property type="evidence" value="ECO:0000314"/>
    <property type="project" value="MGI"/>
</dbReference>
<dbReference type="GO" id="GO:0005125">
    <property type="term" value="F:cytokine activity"/>
    <property type="evidence" value="ECO:0000316"/>
    <property type="project" value="MGI"/>
</dbReference>
<dbReference type="GO" id="GO:0005126">
    <property type="term" value="F:cytokine receptor binding"/>
    <property type="evidence" value="ECO:0007669"/>
    <property type="project" value="InterPro"/>
</dbReference>
<dbReference type="GO" id="GO:0008083">
    <property type="term" value="F:growth factor activity"/>
    <property type="evidence" value="ECO:0007669"/>
    <property type="project" value="UniProtKB-KW"/>
</dbReference>
<dbReference type="GO" id="GO:0030183">
    <property type="term" value="P:B cell differentiation"/>
    <property type="evidence" value="ECO:0000316"/>
    <property type="project" value="MGI"/>
</dbReference>
<dbReference type="GO" id="GO:0042100">
    <property type="term" value="P:B cell proliferation"/>
    <property type="evidence" value="ECO:0000316"/>
    <property type="project" value="MGI"/>
</dbReference>
<dbReference type="GO" id="GO:0016064">
    <property type="term" value="P:immunoglobulin mediated immune response"/>
    <property type="evidence" value="ECO:0000316"/>
    <property type="project" value="MGI"/>
</dbReference>
<dbReference type="GO" id="GO:0038113">
    <property type="term" value="P:interleukin-9-mediated signaling pathway"/>
    <property type="evidence" value="ECO:0007669"/>
    <property type="project" value="Ensembl"/>
</dbReference>
<dbReference type="GO" id="GO:0032754">
    <property type="term" value="P:positive regulation of interleukin-5 production"/>
    <property type="evidence" value="ECO:0000315"/>
    <property type="project" value="UniProtKB"/>
</dbReference>
<dbReference type="GO" id="GO:0046425">
    <property type="term" value="P:regulation of receptor signaling pathway via JAK-STAT"/>
    <property type="evidence" value="ECO:0000314"/>
    <property type="project" value="MGI"/>
</dbReference>
<dbReference type="InterPro" id="IPR018049">
    <property type="entry name" value="IL-7/IL-9_CS"/>
</dbReference>
<dbReference type="InterPro" id="IPR020447">
    <property type="entry name" value="IL-9"/>
</dbReference>
<dbReference type="PANTHER" id="PTHR16926">
    <property type="entry name" value="INTERLEUKIN 9"/>
    <property type="match status" value="1"/>
</dbReference>
<dbReference type="PANTHER" id="PTHR16926:SF1">
    <property type="entry name" value="INTERLEUKIN-9"/>
    <property type="match status" value="1"/>
</dbReference>
<dbReference type="PRINTS" id="PR01926">
    <property type="entry name" value="INTERLEUKIN9"/>
</dbReference>
<dbReference type="PROSITE" id="PS00255">
    <property type="entry name" value="INTERLEUKIN_7_9"/>
    <property type="match status" value="1"/>
</dbReference>
<name>IL9_MOUSE</name>
<protein>
    <recommendedName>
        <fullName>Interleukin-9</fullName>
        <shortName>IL-9</shortName>
    </recommendedName>
    <alternativeName>
        <fullName>Cytokine P40</fullName>
    </alternativeName>
    <alternativeName>
        <fullName>T-cell growth factor P40</fullName>
    </alternativeName>
</protein>
<keyword id="KW-0002">3D-structure</keyword>
<keyword id="KW-0202">Cytokine</keyword>
<keyword id="KW-0903">Direct protein sequencing</keyword>
<keyword id="KW-0325">Glycoprotein</keyword>
<keyword id="KW-0339">Growth factor</keyword>
<keyword id="KW-0873">Pyrrolidone carboxylic acid</keyword>
<keyword id="KW-1185">Reference proteome</keyword>
<keyword id="KW-0964">Secreted</keyword>
<keyword id="KW-0732">Signal</keyword>
<evidence type="ECO:0000269" key="1">
    <source>
    </source>
</evidence>
<evidence type="ECO:0000269" key="2">
    <source>
    </source>
</evidence>
<evidence type="ECO:0000269" key="3">
    <source>
    </source>
</evidence>
<evidence type="ECO:0000269" key="4">
    <source>
    </source>
</evidence>
<evidence type="ECO:0000269" key="5">
    <source>
    </source>
</evidence>
<evidence type="ECO:0000269" key="6">
    <source>
    </source>
</evidence>
<evidence type="ECO:0000269" key="7">
    <source>
    </source>
</evidence>
<evidence type="ECO:0000305" key="8"/>
<evidence type="ECO:0007829" key="9">
    <source>
        <dbReference type="PDB" id="7OX4"/>
    </source>
</evidence>
<feature type="signal peptide" evidence="6">
    <location>
        <begin position="1"/>
        <end position="18"/>
    </location>
</feature>
<feature type="chain" id="PRO_0000015628" description="Interleukin-9">
    <location>
        <begin position="19"/>
        <end position="144"/>
    </location>
</feature>
<feature type="modified residue" description="Pyrrolidone carboxylic acid" evidence="6">
    <location>
        <position position="19"/>
    </location>
</feature>
<feature type="glycosylation site" description="N-linked (GlcNAc...) asparagine" evidence="6">
    <location>
        <position position="50"/>
    </location>
</feature>
<feature type="glycosylation site" description="N-linked (GlcNAc...) asparagine" evidence="6">
    <location>
        <position position="78"/>
    </location>
</feature>
<feature type="glycosylation site" description="N-linked (GlcNAc...) asparagine" evidence="6">
    <location>
        <position position="101"/>
    </location>
</feature>
<feature type="glycosylation site" description="N-linked (GlcNAc...) asparagine" evidence="6">
    <location>
        <position position="114"/>
    </location>
</feature>
<feature type="helix" evidence="9">
    <location>
        <begin position="24"/>
        <end position="37"/>
    </location>
</feature>
<feature type="helix" evidence="9">
    <location>
        <begin position="41"/>
        <end position="44"/>
    </location>
</feature>
<feature type="strand" evidence="9">
    <location>
        <begin position="48"/>
        <end position="50"/>
    </location>
</feature>
<feature type="strand" evidence="9">
    <location>
        <begin position="57"/>
        <end position="60"/>
    </location>
</feature>
<feature type="helix" evidence="9">
    <location>
        <begin position="70"/>
        <end position="79"/>
    </location>
</feature>
<feature type="helix" evidence="9">
    <location>
        <begin position="83"/>
        <end position="85"/>
    </location>
</feature>
<feature type="helix" evidence="9">
    <location>
        <begin position="86"/>
        <end position="101"/>
    </location>
</feature>
<feature type="helix" evidence="9">
    <location>
        <begin position="105"/>
        <end position="108"/>
    </location>
</feature>
<feature type="strand" evidence="9">
    <location>
        <begin position="116"/>
        <end position="119"/>
    </location>
</feature>
<feature type="helix" evidence="9">
    <location>
        <begin position="121"/>
        <end position="138"/>
    </location>
</feature>
<reference key="1">
    <citation type="journal article" date="1989" name="J. Exp. Med.">
        <title>Cloning and characterization of a cDNA for a new mouse T cell growth factor (P40).</title>
        <authorList>
            <person name="van Snick J."/>
            <person name="Goethals A."/>
            <person name="Renauld J.-C."/>
            <person name="van Roost E."/>
            <person name="Uyttenhove C."/>
            <person name="Rubira M.R."/>
            <person name="Moritz R.L."/>
            <person name="Simpson R.J."/>
        </authorList>
    </citation>
    <scope>NUCLEOTIDE SEQUENCE [MRNA]</scope>
    <source>
        <strain>C57BL/6J</strain>
    </source>
</reference>
<reference key="2">
    <citation type="journal article" date="1990" name="J. Immunol.">
        <title>Human P40/IL-9. Expression in activated CD4+ T cells, genomic organization, and comparison with the mouse gene.</title>
        <authorList>
            <person name="Renauld J.-C."/>
            <person name="Goethals A."/>
            <person name="Houssiau F."/>
            <person name="Merz H."/>
            <person name="van Roost E."/>
            <person name="van Snick J."/>
        </authorList>
    </citation>
    <scope>NUCLEOTIDE SEQUENCE [GENOMIC DNA]</scope>
</reference>
<reference key="3">
    <citation type="journal article" date="1989" name="Eur. J. Biochem.">
        <title>Complete amino acid sequence of a new murine T-cell growth factor P40.</title>
        <authorList>
            <person name="Simpson R.J."/>
            <person name="Moritz R.L."/>
            <person name="Rubira M.R."/>
            <person name="Gorman J.J."/>
            <person name="van Snick J."/>
        </authorList>
    </citation>
    <scope>PROTEIN SEQUENCE OF 19-144</scope>
    <scope>PYROGLUTAMATE FORMATION AT GLN-19</scope>
    <scope>GLYCOSYLATION AT ASN-50; ASN-78; ASN-101 AND ASN-114</scope>
</reference>
<reference key="4">
    <citation type="journal article" date="1988" name="Proc. Natl. Acad. Sci. U.S.A.">
        <title>Functional and structural characterization of P40, a mouse glycoprotein with T-cell growth factor activity.</title>
        <authorList>
            <person name="Uyttenhove C."/>
            <person name="Simpson R.J."/>
            <person name="van Snick J."/>
        </authorList>
    </citation>
    <scope>PROTEIN SEQUENCE OF 118-136</scope>
</reference>
<reference key="5">
    <citation type="journal article" date="1990" name="J. Immunol.">
        <title>Functional and biochemical characterization of mouse P40/IL-9 receptors.</title>
        <authorList>
            <person name="Druez C."/>
            <person name="Coulie P."/>
            <person name="Uyttenhove C."/>
            <person name="Van Snick J."/>
        </authorList>
    </citation>
    <scope>FUNCTION</scope>
    <scope>INTERACTION WITH IL9R</scope>
</reference>
<reference key="6">
    <citation type="journal article" date="1995" name="Int. Immunol.">
        <title>Sharing of the IL-2 receptor gamma chain with the functional IL-9 receptor complex.</title>
        <authorList>
            <person name="Kimura Y."/>
            <person name="Takeshita T."/>
            <person name="Kondo M."/>
            <person name="Ishii N."/>
            <person name="Nakamura M."/>
            <person name="Van Snick J."/>
            <person name="Sugamura K."/>
        </authorList>
    </citation>
    <scope>FUNCTION</scope>
    <scope>INTERACTION WITH IL2RG</scope>
</reference>
<reference key="7">
    <citation type="journal article" date="1999" name="J. Biol. Chem.">
        <title>Distinct roles for STAT1, STAT3, and STAT5 in differentiation gene induction and apoptosis inhibition by interleukin-9.</title>
        <authorList>
            <person name="Demoulin J.B."/>
            <person name="Van Roost E."/>
            <person name="Stevens M."/>
            <person name="Groner B."/>
            <person name="Renauld J.C."/>
        </authorList>
    </citation>
    <scope>FUNCTION</scope>
</reference>
<reference key="8">
    <citation type="journal article" date="2000" name="Immunity">
        <title>IL-9-deficient mice establish fundamental roles for IL-9 in pulmonary mastocytosis and goblet cell hyperplasia but not T cell development.</title>
        <authorList>
            <person name="Townsend J.M."/>
            <person name="Fallon G.P."/>
            <person name="Matthews J.D."/>
            <person name="Smith P."/>
            <person name="Jolin E.H."/>
            <person name="McKenzie N.A."/>
        </authorList>
    </citation>
    <scope>FUNCTION</scope>
    <scope>DISRUPTION PHENOTYPE</scope>
</reference>
<reference key="9">
    <citation type="journal article" date="2003" name="Infect. Immun.">
        <title>Modulation of intestinal muscle contraction by interleukin-9 (IL-9) or IL-9 neutralization: correlation with worm expulsion in murine nematode infections.</title>
        <authorList>
            <person name="Khan W.I."/>
            <person name="Richard M."/>
            <person name="Akiho H."/>
            <person name="Blennerhasset P.A."/>
            <person name="Humphreys N.E."/>
            <person name="Grencis R.K."/>
            <person name="Van Snick J."/>
            <person name="Collins S.M."/>
        </authorList>
    </citation>
    <scope>FUNCTION</scope>
</reference>
<reference key="10">
    <citation type="journal article" date="2009" name="Proc. Natl. Acad. Sci. U.S.A.">
        <title>IL-9 induces differentiation of TH17 cells and enhances function of FoxP3+ natural regulatory T cells.</title>
        <authorList>
            <person name="Elyaman W."/>
            <person name="Bradshaw E.M."/>
            <person name="Uyttenhove C."/>
            <person name="Dardalhon V."/>
            <person name="Awasthi A."/>
            <person name="Imitola J."/>
            <person name="Bettelli E."/>
            <person name="Oukka M."/>
            <person name="van Snick J."/>
            <person name="Renauld J.C."/>
            <person name="Kuchroo V.K."/>
            <person name="Khoury S.J."/>
        </authorList>
    </citation>
    <scope>FUNCTION</scope>
</reference>
<gene>
    <name type="primary">Il9</name>
</gene>
<organism>
    <name type="scientific">Mus musculus</name>
    <name type="common">Mouse</name>
    <dbReference type="NCBI Taxonomy" id="10090"/>
    <lineage>
        <taxon>Eukaryota</taxon>
        <taxon>Metazoa</taxon>
        <taxon>Chordata</taxon>
        <taxon>Craniata</taxon>
        <taxon>Vertebrata</taxon>
        <taxon>Euteleostomi</taxon>
        <taxon>Mammalia</taxon>
        <taxon>Eutheria</taxon>
        <taxon>Euarchontoglires</taxon>
        <taxon>Glires</taxon>
        <taxon>Rodentia</taxon>
        <taxon>Myomorpha</taxon>
        <taxon>Muroidea</taxon>
        <taxon>Muridae</taxon>
        <taxon>Murinae</taxon>
        <taxon>Mus</taxon>
        <taxon>Mus</taxon>
    </lineage>
</organism>
<comment type="function">
    <text evidence="1 2 3 4 5 7">Multifunctional cytokine secreted mainly by T-helper 2 lymphocytes and also mast cells or NKT cells that plays important roles in the immune response against parasites (PubMed:11070175, PubMed:19433802). Affects intestinal epithelial permeability and adaptive immunity (PubMed:12704113). In addition, induces the differentiation of specific T-cell subsets such as IL-17 producing helper T-cells (TH17) and also proliferation and differentiation of mast cells (PubMed:11070175, PubMed:19433802). Mechanistically, exerts its biological effects through a receptor composed of IL9R subunit and a signal transducing subunit IL2RG (PubMed:2145361, PubMed:7718508). Receptor stimulation results in the rapid activation of JAK1 and JAK3 kinase activities leading to STAT1, STAT3 and STAT5-mediated transcriptional programs (PubMed:10464327). Induction of differentiation genes seems to be mediated by STAT1 alone, while protection of cells from apoptosis depends on STAT3 and STAT5 (PubMed:10464327).</text>
</comment>
<comment type="subunit">
    <text evidence="5 7">Interacts with IL9R (PubMed:2145361). Interacts with IL2RG (PubMed:7718508).</text>
</comment>
<comment type="subcellular location">
    <subcellularLocation>
        <location>Secreted</location>
    </subcellularLocation>
</comment>
<comment type="disruption phenotype">
    <text evidence="4">Deltion mice do not show defects in T-cell development or differentiation, the generation of naive or antigen-driven antibody responses, or the expulsion of the intestinal parasitic nematode Nippostrongylus brasiliensis. However, mastocytosis is severely impaired in these animals.</text>
</comment>
<comment type="similarity">
    <text evidence="8">Belongs to the IL-7/IL-9 family.</text>
</comment>
<sequence length="144" mass="16075">MLVTYILASVLLFSSVLGQRCSTTWGIRDTNYLIENLKDDPPSKCSCSGNVTSCLCLSVPTDDCTTPCYREGLLQLTNATQKSRLLPVFHRVKRIVEVLKNITCPSFSCEKPCNQTMAGNTLSFLKSLLGTFQKTEMQRQKSRP</sequence>
<proteinExistence type="evidence at protein level"/>